<sequence>MESTGKVKKAFGGRKPPGAPKTKSVSKSMKAGLQFPVGRITRFLKKGRYAQRLGGGAPVYMAAVLEYLAAEVLELAGNAARDNKKSRIIPRHLLLAIRNDEELGKLLSGVTIAHGGVLPNINSVLLPKKSATKPAEEKATKSPVKSPKKA</sequence>
<organism>
    <name type="scientific">Arabidopsis thaliana</name>
    <name type="common">Mouse-ear cress</name>
    <dbReference type="NCBI Taxonomy" id="3702"/>
    <lineage>
        <taxon>Eukaryota</taxon>
        <taxon>Viridiplantae</taxon>
        <taxon>Streptophyta</taxon>
        <taxon>Embryophyta</taxon>
        <taxon>Tracheophyta</taxon>
        <taxon>Spermatophyta</taxon>
        <taxon>Magnoliopsida</taxon>
        <taxon>eudicotyledons</taxon>
        <taxon>Gunneridae</taxon>
        <taxon>Pentapetalae</taxon>
        <taxon>rosids</taxon>
        <taxon>malvids</taxon>
        <taxon>Brassicales</taxon>
        <taxon>Brassicaceae</taxon>
        <taxon>Camelineae</taxon>
        <taxon>Arabidopsis</taxon>
    </lineage>
</organism>
<comment type="function">
    <text>Core component of nucleosome. Nucleosomes wrap and compact DNA into chromatin, limiting DNA accessibility to the cellular machineries which require DNA as a template. Histones thereby play a central role in transcription regulation, DNA repair, DNA replication and chromosomal stability. DNA accessibility is regulated via a complex set of post-translational modifications of histones, also called histone code, and nucleosome remodeling.</text>
</comment>
<comment type="subunit">
    <text>The nucleosome is a histone octamer containing two molecules each of H2A, H2B, H3 and H4 assembled in one H3-H4 heterotetramer and two H2A-H2B heterodimers. The octamer wraps approximately 147 bp of DNA.</text>
</comment>
<comment type="subcellular location">
    <subcellularLocation>
        <location evidence="1">Nucleus</location>
    </subcellularLocation>
    <subcellularLocation>
        <location evidence="1">Chromosome</location>
    </subcellularLocation>
</comment>
<comment type="tissue specificity">
    <text evidence="3">Strong expression through-out the roots and leaves. Also found in meristems and dividing cells.</text>
</comment>
<comment type="domain">
    <text>Contains one SPKK motif which may interact with the minor groove of A/T-rich DNA sites. Phosphorylation of this motif may regulate DNA binding. This motif is reiterated in both termini of histone H1 and in the N-terminus of sea urchin histones H2B, but its presence in the C-terminus seems to be unique to plant H2A.</text>
</comment>
<comment type="PTM">
    <text>Not ubiquitinated.</text>
</comment>
<comment type="similarity">
    <text evidence="4">Belongs to the histone H2A family.</text>
</comment>
<keyword id="KW-0002">3D-structure</keyword>
<keyword id="KW-0158">Chromosome</keyword>
<keyword id="KW-0238">DNA-binding</keyword>
<keyword id="KW-0544">Nucleosome core</keyword>
<keyword id="KW-0539">Nucleus</keyword>
<keyword id="KW-0597">Phosphoprotein</keyword>
<keyword id="KW-1185">Reference proteome</keyword>
<dbReference type="EMBL" id="AB015475">
    <property type="protein sequence ID" value="BAB08355.1"/>
    <property type="molecule type" value="Genomic_DNA"/>
</dbReference>
<dbReference type="EMBL" id="CP002688">
    <property type="protein sequence ID" value="AED97244.1"/>
    <property type="molecule type" value="Genomic_DNA"/>
</dbReference>
<dbReference type="EMBL" id="AY085948">
    <property type="protein sequence ID" value="AAM63158.1"/>
    <property type="molecule type" value="mRNA"/>
</dbReference>
<dbReference type="EMBL" id="AK117890">
    <property type="protein sequence ID" value="BAC42529.1"/>
    <property type="molecule type" value="mRNA"/>
</dbReference>
<dbReference type="EMBL" id="BT003669">
    <property type="protein sequence ID" value="AAO39897.1"/>
    <property type="molecule type" value="mRNA"/>
</dbReference>
<dbReference type="RefSeq" id="NP_200795.1">
    <property type="nucleotide sequence ID" value="NM_125380.4"/>
</dbReference>
<dbReference type="PDB" id="7UX9">
    <property type="method" value="EM"/>
    <property type="resolution" value="3.20 A"/>
    <property type="chains" value="A/B=1-150"/>
</dbReference>
<dbReference type="PDB" id="8J90">
    <property type="method" value="EM"/>
    <property type="resolution" value="4.71 A"/>
    <property type="chains" value="C/G=1-150"/>
</dbReference>
<dbReference type="PDB" id="8J92">
    <property type="method" value="EM"/>
    <property type="resolution" value="2.90 A"/>
    <property type="chains" value="C/G=1-150"/>
</dbReference>
<dbReference type="PDB" id="8KCC">
    <property type="method" value="EM"/>
    <property type="resolution" value="3.10 A"/>
    <property type="chains" value="A/B=1-150"/>
</dbReference>
<dbReference type="PDBsum" id="7UX9"/>
<dbReference type="PDBsum" id="8J90"/>
<dbReference type="PDBsum" id="8J92"/>
<dbReference type="PDBsum" id="8KCC"/>
<dbReference type="EMDB" id="EMD-26855"/>
<dbReference type="EMDB" id="EMD-36083"/>
<dbReference type="EMDB" id="EMD-36085"/>
<dbReference type="EMDB" id="EMD-37099"/>
<dbReference type="SMR" id="Q9FJE8"/>
<dbReference type="BioGRID" id="21353">
    <property type="interactions" value="5"/>
</dbReference>
<dbReference type="FunCoup" id="Q9FJE8">
    <property type="interactions" value="115"/>
</dbReference>
<dbReference type="IntAct" id="Q9FJE8">
    <property type="interactions" value="1"/>
</dbReference>
<dbReference type="STRING" id="3702.Q9FJE8"/>
<dbReference type="iPTMnet" id="Q9FJE8"/>
<dbReference type="PaxDb" id="3702-AT5G59870.1"/>
<dbReference type="ProteomicsDB" id="230123"/>
<dbReference type="EnsemblPlants" id="AT5G59870.1">
    <property type="protein sequence ID" value="AT5G59870.1"/>
    <property type="gene ID" value="AT5G59870"/>
</dbReference>
<dbReference type="GeneID" id="836109"/>
<dbReference type="Gramene" id="AT5G59870.1">
    <property type="protein sequence ID" value="AT5G59870.1"/>
    <property type="gene ID" value="AT5G59870"/>
</dbReference>
<dbReference type="KEGG" id="ath:AT5G59870"/>
<dbReference type="Araport" id="AT5G59870"/>
<dbReference type="TAIR" id="AT5G59870">
    <property type="gene designation" value="HTA6"/>
</dbReference>
<dbReference type="eggNOG" id="KOG1756">
    <property type="taxonomic scope" value="Eukaryota"/>
</dbReference>
<dbReference type="HOGENOM" id="CLU_062828_3_1_1"/>
<dbReference type="InParanoid" id="Q9FJE8"/>
<dbReference type="OMA" id="LILECFW"/>
<dbReference type="OrthoDB" id="9421954at2759"/>
<dbReference type="PhylomeDB" id="Q9FJE8"/>
<dbReference type="CD-CODE" id="4299E36E">
    <property type="entry name" value="Nucleolus"/>
</dbReference>
<dbReference type="PRO" id="PR:Q9FJE8"/>
<dbReference type="Proteomes" id="UP000006548">
    <property type="component" value="Chromosome 5"/>
</dbReference>
<dbReference type="ExpressionAtlas" id="Q9FJE8">
    <property type="expression patterns" value="baseline and differential"/>
</dbReference>
<dbReference type="GO" id="GO:0000792">
    <property type="term" value="C:heterochromatin"/>
    <property type="evidence" value="ECO:0000314"/>
    <property type="project" value="TAIR"/>
</dbReference>
<dbReference type="GO" id="GO:0005730">
    <property type="term" value="C:nucleolus"/>
    <property type="evidence" value="ECO:0007005"/>
    <property type="project" value="TAIR"/>
</dbReference>
<dbReference type="GO" id="GO:0000786">
    <property type="term" value="C:nucleosome"/>
    <property type="evidence" value="ECO:0007669"/>
    <property type="project" value="UniProtKB-KW"/>
</dbReference>
<dbReference type="GO" id="GO:0005721">
    <property type="term" value="C:pericentric heterochromatin"/>
    <property type="evidence" value="ECO:0000314"/>
    <property type="project" value="TAIR"/>
</dbReference>
<dbReference type="GO" id="GO:0009506">
    <property type="term" value="C:plasmodesma"/>
    <property type="evidence" value="ECO:0007005"/>
    <property type="project" value="TAIR"/>
</dbReference>
<dbReference type="GO" id="GO:0009536">
    <property type="term" value="C:plastid"/>
    <property type="evidence" value="ECO:0007005"/>
    <property type="project" value="TAIR"/>
</dbReference>
<dbReference type="GO" id="GO:0003682">
    <property type="term" value="F:chromatin binding"/>
    <property type="evidence" value="ECO:0000314"/>
    <property type="project" value="TAIR"/>
</dbReference>
<dbReference type="GO" id="GO:0003677">
    <property type="term" value="F:DNA binding"/>
    <property type="evidence" value="ECO:0007669"/>
    <property type="project" value="UniProtKB-KW"/>
</dbReference>
<dbReference type="GO" id="GO:0046982">
    <property type="term" value="F:protein heterodimerization activity"/>
    <property type="evidence" value="ECO:0007669"/>
    <property type="project" value="InterPro"/>
</dbReference>
<dbReference type="GO" id="GO:0030527">
    <property type="term" value="F:structural constituent of chromatin"/>
    <property type="evidence" value="ECO:0007669"/>
    <property type="project" value="InterPro"/>
</dbReference>
<dbReference type="GO" id="GO:0070828">
    <property type="term" value="P:heterochromatin organization"/>
    <property type="evidence" value="ECO:0000316"/>
    <property type="project" value="TAIR"/>
</dbReference>
<dbReference type="CDD" id="cd00074">
    <property type="entry name" value="HFD_H2A"/>
    <property type="match status" value="1"/>
</dbReference>
<dbReference type="FunFam" id="1.10.20.10:FF:000026">
    <property type="entry name" value="Histone H2A"/>
    <property type="match status" value="1"/>
</dbReference>
<dbReference type="Gene3D" id="1.10.20.10">
    <property type="entry name" value="Histone, subunit A"/>
    <property type="match status" value="1"/>
</dbReference>
<dbReference type="InterPro" id="IPR009072">
    <property type="entry name" value="Histone-fold"/>
</dbReference>
<dbReference type="InterPro" id="IPR002119">
    <property type="entry name" value="Histone_H2A"/>
</dbReference>
<dbReference type="InterPro" id="IPR007125">
    <property type="entry name" value="Histone_H2A/H2B/H3"/>
</dbReference>
<dbReference type="InterPro" id="IPR032454">
    <property type="entry name" value="Histone_H2A_C"/>
</dbReference>
<dbReference type="InterPro" id="IPR032458">
    <property type="entry name" value="Histone_H2A_CS"/>
</dbReference>
<dbReference type="PANTHER" id="PTHR23430">
    <property type="entry name" value="HISTONE H2A"/>
    <property type="match status" value="1"/>
</dbReference>
<dbReference type="Pfam" id="PF00125">
    <property type="entry name" value="Histone"/>
    <property type="match status" value="1"/>
</dbReference>
<dbReference type="Pfam" id="PF16211">
    <property type="entry name" value="Histone_H2A_C"/>
    <property type="match status" value="1"/>
</dbReference>
<dbReference type="PRINTS" id="PR00620">
    <property type="entry name" value="HISTONEH2A"/>
</dbReference>
<dbReference type="SMART" id="SM00414">
    <property type="entry name" value="H2A"/>
    <property type="match status" value="1"/>
</dbReference>
<dbReference type="SUPFAM" id="SSF47113">
    <property type="entry name" value="Histone-fold"/>
    <property type="match status" value="1"/>
</dbReference>
<dbReference type="PROSITE" id="PS00046">
    <property type="entry name" value="HISTONE_H2A"/>
    <property type="match status" value="1"/>
</dbReference>
<feature type="chain" id="PRO_0000055204" description="Probable histone H2A.7">
    <location>
        <begin position="1"/>
        <end position="150"/>
    </location>
</feature>
<feature type="region of interest" description="Disordered" evidence="2">
    <location>
        <begin position="1"/>
        <end position="27"/>
    </location>
</feature>
<feature type="region of interest" description="Disordered" evidence="2">
    <location>
        <begin position="129"/>
        <end position="150"/>
    </location>
</feature>
<feature type="short sequence motif" description="SPKK motif">
    <location>
        <begin position="146"/>
        <end position="149"/>
    </location>
</feature>
<feature type="compositionally biased region" description="Basic residues" evidence="2">
    <location>
        <begin position="1"/>
        <end position="12"/>
    </location>
</feature>
<feature type="modified residue" description="Phosphoserine" evidence="5">
    <location>
        <position position="146"/>
    </location>
</feature>
<feature type="helix" evidence="7">
    <location>
        <begin position="27"/>
        <end position="31"/>
    </location>
</feature>
<feature type="helix" evidence="7">
    <location>
        <begin position="37"/>
        <end position="46"/>
    </location>
</feature>
<feature type="strand" evidence="7">
    <location>
        <begin position="49"/>
        <end position="53"/>
    </location>
</feature>
<feature type="helix" evidence="7">
    <location>
        <begin position="57"/>
        <end position="82"/>
    </location>
</feature>
<feature type="strand" evidence="7">
    <location>
        <begin position="86"/>
        <end position="88"/>
    </location>
</feature>
<feature type="helix" evidence="7">
    <location>
        <begin position="90"/>
        <end position="99"/>
    </location>
</feature>
<feature type="helix" evidence="7">
    <location>
        <begin position="101"/>
        <end position="106"/>
    </location>
</feature>
<feature type="strand" evidence="7">
    <location>
        <begin position="107"/>
        <end position="109"/>
    </location>
</feature>
<feature type="strand" evidence="6">
    <location>
        <begin position="110"/>
        <end position="112"/>
    </location>
</feature>
<feature type="turn" evidence="7">
    <location>
        <begin position="123"/>
        <end position="125"/>
    </location>
</feature>
<gene>
    <name type="ordered locus">At5g59870</name>
    <name type="ORF">MMN10.22</name>
    <name type="ORF">MMN10_90</name>
</gene>
<reference key="1">
    <citation type="journal article" date="1998" name="DNA Res.">
        <title>Structural analysis of Arabidopsis thaliana chromosome 5. VII. Sequence features of the regions of 1,013,767 bp covered by sixteen physically assigned P1 and TAC clones.</title>
        <authorList>
            <person name="Nakamura Y."/>
            <person name="Sato S."/>
            <person name="Asamizu E."/>
            <person name="Kaneko T."/>
            <person name="Kotani H."/>
            <person name="Miyajima N."/>
            <person name="Tabata S."/>
        </authorList>
    </citation>
    <scope>NUCLEOTIDE SEQUENCE [LARGE SCALE GENOMIC DNA]</scope>
    <source>
        <strain>cv. Columbia</strain>
    </source>
</reference>
<reference key="2">
    <citation type="journal article" date="2017" name="Plant J.">
        <title>Araport11: a complete reannotation of the Arabidopsis thaliana reference genome.</title>
        <authorList>
            <person name="Cheng C.Y."/>
            <person name="Krishnakumar V."/>
            <person name="Chan A.P."/>
            <person name="Thibaud-Nissen F."/>
            <person name="Schobel S."/>
            <person name="Town C.D."/>
        </authorList>
    </citation>
    <scope>GENOME REANNOTATION</scope>
    <source>
        <strain>cv. Columbia</strain>
    </source>
</reference>
<reference key="3">
    <citation type="submission" date="2002-03" db="EMBL/GenBank/DDBJ databases">
        <title>Full-length cDNA from Arabidopsis thaliana.</title>
        <authorList>
            <person name="Brover V.V."/>
            <person name="Troukhan M.E."/>
            <person name="Alexandrov N.A."/>
            <person name="Lu Y.-P."/>
            <person name="Flavell R.B."/>
            <person name="Feldmann K.A."/>
        </authorList>
    </citation>
    <scope>NUCLEOTIDE SEQUENCE [LARGE SCALE MRNA]</scope>
</reference>
<reference key="4">
    <citation type="journal article" date="2002" name="Science">
        <title>Functional annotation of a full-length Arabidopsis cDNA collection.</title>
        <authorList>
            <person name="Seki M."/>
            <person name="Narusaka M."/>
            <person name="Kamiya A."/>
            <person name="Ishida J."/>
            <person name="Satou M."/>
            <person name="Sakurai T."/>
            <person name="Nakajima M."/>
            <person name="Enju A."/>
            <person name="Akiyama K."/>
            <person name="Oono Y."/>
            <person name="Muramatsu M."/>
            <person name="Hayashizaki Y."/>
            <person name="Kawai J."/>
            <person name="Carninci P."/>
            <person name="Itoh M."/>
            <person name="Ishii Y."/>
            <person name="Arakawa T."/>
            <person name="Shibata K."/>
            <person name="Shinagawa A."/>
            <person name="Shinozaki K."/>
        </authorList>
    </citation>
    <scope>NUCLEOTIDE SEQUENCE [LARGE SCALE MRNA]</scope>
    <source>
        <strain>cv. Columbia</strain>
    </source>
</reference>
<reference key="5">
    <citation type="journal article" date="2003" name="Science">
        <title>Empirical analysis of transcriptional activity in the Arabidopsis genome.</title>
        <authorList>
            <person name="Yamada K."/>
            <person name="Lim J."/>
            <person name="Dale J.M."/>
            <person name="Chen H."/>
            <person name="Shinn P."/>
            <person name="Palm C.J."/>
            <person name="Southwick A.M."/>
            <person name="Wu H.C."/>
            <person name="Kim C.J."/>
            <person name="Nguyen M."/>
            <person name="Pham P.K."/>
            <person name="Cheuk R.F."/>
            <person name="Karlin-Newmann G."/>
            <person name="Liu S.X."/>
            <person name="Lam B."/>
            <person name="Sakano H."/>
            <person name="Wu T."/>
            <person name="Yu G."/>
            <person name="Miranda M."/>
            <person name="Quach H.L."/>
            <person name="Tripp M."/>
            <person name="Chang C.H."/>
            <person name="Lee J.M."/>
            <person name="Toriumi M.J."/>
            <person name="Chan M.M."/>
            <person name="Tang C.C."/>
            <person name="Onodera C.S."/>
            <person name="Deng J.M."/>
            <person name="Akiyama K."/>
            <person name="Ansari Y."/>
            <person name="Arakawa T."/>
            <person name="Banh J."/>
            <person name="Banno F."/>
            <person name="Bowser L."/>
            <person name="Brooks S.Y."/>
            <person name="Carninci P."/>
            <person name="Chao Q."/>
            <person name="Choy N."/>
            <person name="Enju A."/>
            <person name="Goldsmith A.D."/>
            <person name="Gurjal M."/>
            <person name="Hansen N.F."/>
            <person name="Hayashizaki Y."/>
            <person name="Johnson-Hopson C."/>
            <person name="Hsuan V.W."/>
            <person name="Iida K."/>
            <person name="Karnes M."/>
            <person name="Khan S."/>
            <person name="Koesema E."/>
            <person name="Ishida J."/>
            <person name="Jiang P.X."/>
            <person name="Jones T."/>
            <person name="Kawai J."/>
            <person name="Kamiya A."/>
            <person name="Meyers C."/>
            <person name="Nakajima M."/>
            <person name="Narusaka M."/>
            <person name="Seki M."/>
            <person name="Sakurai T."/>
            <person name="Satou M."/>
            <person name="Tamse R."/>
            <person name="Vaysberg M."/>
            <person name="Wallender E.K."/>
            <person name="Wong C."/>
            <person name="Yamamura Y."/>
            <person name="Yuan S."/>
            <person name="Shinozaki K."/>
            <person name="Davis R.W."/>
            <person name="Theologis A."/>
            <person name="Ecker J.R."/>
        </authorList>
    </citation>
    <scope>NUCLEOTIDE SEQUENCE [LARGE SCALE MRNA]</scope>
    <source>
        <strain>cv. Columbia</strain>
    </source>
</reference>
<reference key="6">
    <citation type="journal article" date="2006" name="Plant Cell">
        <title>Constitutive expression exposes functional redundancy between the Arabidopsis histone H2A gene HTA1 and other H2A gene family members.</title>
        <authorList>
            <person name="Yi H."/>
            <person name="Sardesai N."/>
            <person name="Fujinuma T."/>
            <person name="Chan C.-W."/>
            <person name="Veena X."/>
            <person name="Gelvin S.B."/>
        </authorList>
    </citation>
    <scope>TISSUE SPECIFICITY</scope>
    <scope>NOMENCLATURE</scope>
</reference>
<reference key="7">
    <citation type="journal article" date="2007" name="Nature">
        <title>Control of DNA methylation and heterochromatic silencing by histone H2B deubiquitination.</title>
        <authorList>
            <person name="Sridhar V.V."/>
            <person name="Kapoor A."/>
            <person name="Zhang K."/>
            <person name="Zhu J."/>
            <person name="Zhou T."/>
            <person name="Hasegawa P.M."/>
            <person name="Bressan R.A."/>
            <person name="Zhu J.-K."/>
        </authorList>
    </citation>
    <scope>LACK OF UBIQUITINATION</scope>
    <scope>IDENTIFICATION BY MASS SPECTROMETRY</scope>
</reference>
<reference key="8">
    <citation type="journal article" date="2009" name="Plant Physiol.">
        <title>Large-scale Arabidopsis phosphoproteome profiling reveals novel chloroplast kinase substrates and phosphorylation networks.</title>
        <authorList>
            <person name="Reiland S."/>
            <person name="Messerli G."/>
            <person name="Baerenfaller K."/>
            <person name="Gerrits B."/>
            <person name="Endler A."/>
            <person name="Grossmann J."/>
            <person name="Gruissem W."/>
            <person name="Baginsky S."/>
        </authorList>
    </citation>
    <scope>PHOSPHORYLATION [LARGE SCALE ANALYSIS] AT SER-146</scope>
    <scope>IDENTIFICATION BY MASS SPECTROMETRY [LARGE SCALE ANALYSIS]</scope>
</reference>
<protein>
    <recommendedName>
        <fullName>Probable histone H2A.7</fullName>
    </recommendedName>
    <alternativeName>
        <fullName>HTA6</fullName>
    </alternativeName>
</protein>
<accession>Q9FJE8</accession>
<evidence type="ECO:0000250" key="1"/>
<evidence type="ECO:0000256" key="2">
    <source>
        <dbReference type="SAM" id="MobiDB-lite"/>
    </source>
</evidence>
<evidence type="ECO:0000269" key="3">
    <source>
    </source>
</evidence>
<evidence type="ECO:0000305" key="4"/>
<evidence type="ECO:0007744" key="5">
    <source>
    </source>
</evidence>
<evidence type="ECO:0007829" key="6">
    <source>
        <dbReference type="PDB" id="7UX9"/>
    </source>
</evidence>
<evidence type="ECO:0007829" key="7">
    <source>
        <dbReference type="PDB" id="8J92"/>
    </source>
</evidence>
<name>H2A7_ARATH</name>
<proteinExistence type="evidence at protein level"/>